<organism>
    <name type="scientific">Saccharolobus islandicus (strain REY15A)</name>
    <name type="common">Sulfolobus islandicus</name>
    <dbReference type="NCBI Taxonomy" id="930945"/>
    <lineage>
        <taxon>Archaea</taxon>
        <taxon>Thermoproteota</taxon>
        <taxon>Thermoprotei</taxon>
        <taxon>Sulfolobales</taxon>
        <taxon>Sulfolobaceae</taxon>
        <taxon>Saccharolobus</taxon>
    </lineage>
</organism>
<accession>F0NEL5</accession>
<reference evidence="6" key="1">
    <citation type="journal article" date="2011" name="J. Bacteriol.">
        <title>Genome analyses of icelandic strains of Sulfolobus islandicus, model organisms for genetic and virus-host interaction studies.</title>
        <authorList>
            <person name="Guo L."/>
            <person name="Brugger K."/>
            <person name="Liu C."/>
            <person name="Shah S.A."/>
            <person name="Zheng H."/>
            <person name="Zhu Y."/>
            <person name="Wang S."/>
            <person name="Lillestol R.K."/>
            <person name="Chen L."/>
            <person name="Frank J."/>
            <person name="Prangishvili D."/>
            <person name="Paulin L."/>
            <person name="She Q."/>
            <person name="Huang L."/>
            <person name="Garrett R.A."/>
        </authorList>
    </citation>
    <scope>NUCLEOTIDE SEQUENCE [LARGE SCALE GENOMIC DNA]</scope>
    <source>
        <strain>REY15A</strain>
    </source>
</reference>
<reference key="2">
    <citation type="journal article" date="2015" name="Extremophiles">
        <title>Genetic analysis of the Holliday junction resolvases Hje and Hjc in Sulfolobus islandicus.</title>
        <authorList>
            <person name="Huang Q."/>
            <person name="Li Y."/>
            <person name="Zeng C."/>
            <person name="Song T."/>
            <person name="Yan Z."/>
            <person name="Ni J."/>
            <person name="She Q."/>
            <person name="Shen Y."/>
        </authorList>
    </citation>
    <scope>FUNCTION</scope>
    <scope>DISRUPTION PHENOTYPE</scope>
    <source>
        <strain>REY15A / E233S</strain>
    </source>
</reference>
<keyword id="KW-0227">DNA damage</keyword>
<keyword id="KW-0233">DNA recombination</keyword>
<keyword id="KW-0234">DNA repair</keyword>
<keyword id="KW-0238">DNA-binding</keyword>
<keyword id="KW-0255">Endonuclease</keyword>
<keyword id="KW-0378">Hydrolase</keyword>
<keyword id="KW-0460">Magnesium</keyword>
<keyword id="KW-0479">Metal-binding</keyword>
<keyword id="KW-0540">Nuclease</keyword>
<name>HJE_SACI5</name>
<proteinExistence type="inferred from homology"/>
<comment type="function">
    <text evidence="1 3">A structure-specific endonuclease that resolves Holliday junction (HJ) intermediates during genetic recombination. Acts only on 4-way DNA junctions in a sequence non-specific manner; introduces paired nicks in opposing strands 2 bases 3' of the point of strand exchange only on continuous strands of 4-way junction DNA. Cleaves both mobile and immobile junctions (By similarity). Plays a more direct role in DNA repair than Hjc. Overexpression of this protein decreases the growth rate, and leads to genomic instability, and global transcriptomic changes (PubMed:25644236).</text>
</comment>
<comment type="catalytic activity">
    <reaction evidence="1">
        <text>Endonucleolytic cleavage at a junction such as a reciprocal single-stranded crossover between two homologous DNA duplexes (Holliday junction).</text>
        <dbReference type="EC" id="3.1.21.10"/>
    </reaction>
</comment>
<comment type="cofactor">
    <cofactor evidence="1">
        <name>Mg(2+)</name>
        <dbReference type="ChEBI" id="CHEBI:18420"/>
    </cofactor>
</comment>
<comment type="subunit">
    <text evidence="1">Homodimer.</text>
</comment>
<comment type="disruption phenotype">
    <text evidence="3">Not essential, it can be disrupted (PubMed:25644236). More sensitive to DNA damaging agents hydroxyurea, cisplatin, and methyl methanesulfonate than wild-type (PubMed:25644236). Double hjc-hje deletion mutants cannot be made (PubMed:25644236).</text>
</comment>
<comment type="miscellaneous">
    <text>A second Holliday junction resolving enzyme, Hjc, probably with different substrate specificity exists in this organism.</text>
</comment>
<comment type="similarity">
    <text evidence="5">Belongs to the Holliday junction resolvase Hjc family. Hje subfamily.</text>
</comment>
<gene>
    <name evidence="4" type="primary">hje</name>
    <name evidence="6" type="ordered locus">SiRe_0930</name>
</gene>
<feature type="chain" id="PRO_0000459126" description="Crossover junction endodeoxyribonuclease Hje">
    <location>
        <begin position="1"/>
        <end position="135"/>
    </location>
</feature>
<feature type="binding site" evidence="2">
    <location>
        <position position="10"/>
    </location>
    <ligand>
        <name>Mg(2+)</name>
        <dbReference type="ChEBI" id="CHEBI:18420"/>
    </ligand>
</feature>
<feature type="binding site" evidence="2">
    <location>
        <position position="39"/>
    </location>
    <ligand>
        <name>Mg(2+)</name>
        <dbReference type="ChEBI" id="CHEBI:18420"/>
    </ligand>
</feature>
<feature type="binding site" evidence="2">
    <location>
        <position position="52"/>
    </location>
    <ligand>
        <name>Mg(2+)</name>
        <dbReference type="ChEBI" id="CHEBI:18420"/>
    </ligand>
</feature>
<feature type="site" description="Transition state stabilizer" evidence="2">
    <location>
        <position position="54"/>
    </location>
</feature>
<sequence length="135" mass="15442">MNRDIGKNAERELVSILRGEGFNAVRIPTSNSSPNPLPDIFATKENTLLSIECKSTWENKVKVKENQVRKLFEFLSMFTMSGIPIIAVKFKQIHEWRVLIPKKAEDIVVTIDNTISIEDLFKILEKSVEEKILTP</sequence>
<dbReference type="EC" id="3.1.21.10" evidence="1"/>
<dbReference type="EMBL" id="CP002425">
    <property type="protein sequence ID" value="ADX84998.1"/>
    <property type="molecule type" value="Genomic_DNA"/>
</dbReference>
<dbReference type="SMR" id="F0NEL5"/>
<dbReference type="KEGG" id="sir:SiRe_0930"/>
<dbReference type="eggNOG" id="arCOG00919">
    <property type="taxonomic scope" value="Archaea"/>
</dbReference>
<dbReference type="HOGENOM" id="CLU_1881165_0_0_2"/>
<dbReference type="Proteomes" id="UP000002664">
    <property type="component" value="Chromosome"/>
</dbReference>
<dbReference type="GO" id="GO:0003677">
    <property type="term" value="F:DNA binding"/>
    <property type="evidence" value="ECO:0007669"/>
    <property type="project" value="UniProtKB-KW"/>
</dbReference>
<dbReference type="GO" id="GO:0004519">
    <property type="term" value="F:endonuclease activity"/>
    <property type="evidence" value="ECO:0007669"/>
    <property type="project" value="UniProtKB-KW"/>
</dbReference>
<dbReference type="GO" id="GO:0046872">
    <property type="term" value="F:metal ion binding"/>
    <property type="evidence" value="ECO:0007669"/>
    <property type="project" value="UniProtKB-KW"/>
</dbReference>
<dbReference type="GO" id="GO:0006310">
    <property type="term" value="P:DNA recombination"/>
    <property type="evidence" value="ECO:0007669"/>
    <property type="project" value="UniProtKB-KW"/>
</dbReference>
<dbReference type="GO" id="GO:0006281">
    <property type="term" value="P:DNA repair"/>
    <property type="evidence" value="ECO:0007669"/>
    <property type="project" value="UniProtKB-KW"/>
</dbReference>
<dbReference type="CDD" id="cd00523">
    <property type="entry name" value="Holliday_junction_resolvase"/>
    <property type="match status" value="1"/>
</dbReference>
<dbReference type="Gene3D" id="3.40.1350.10">
    <property type="match status" value="1"/>
</dbReference>
<dbReference type="InterPro" id="IPR002732">
    <property type="entry name" value="Hjc"/>
</dbReference>
<dbReference type="InterPro" id="IPR014428">
    <property type="entry name" value="Hjc_arc"/>
</dbReference>
<dbReference type="InterPro" id="IPR011335">
    <property type="entry name" value="Restrct_endonuc-II-like"/>
</dbReference>
<dbReference type="InterPro" id="IPR011856">
    <property type="entry name" value="tRNA_endonuc-like_dom_sf"/>
</dbReference>
<dbReference type="NCBIfam" id="NF040854">
    <property type="entry name" value="Hol_resolv_Hjc"/>
    <property type="match status" value="1"/>
</dbReference>
<dbReference type="PANTHER" id="PTHR39651">
    <property type="entry name" value="HOLLIDAY JUNCTION RESOLVASE HJC"/>
    <property type="match status" value="1"/>
</dbReference>
<dbReference type="PANTHER" id="PTHR39651:SF1">
    <property type="entry name" value="HOLLIDAY JUNCTION RESOLVASE HJC"/>
    <property type="match status" value="1"/>
</dbReference>
<dbReference type="Pfam" id="PF01870">
    <property type="entry name" value="Hjc"/>
    <property type="match status" value="1"/>
</dbReference>
<dbReference type="PIRSF" id="PIRSF004985">
    <property type="entry name" value="Hlld_jn_rslvs_ar"/>
    <property type="match status" value="1"/>
</dbReference>
<dbReference type="SUPFAM" id="SSF52980">
    <property type="entry name" value="Restriction endonuclease-like"/>
    <property type="match status" value="1"/>
</dbReference>
<protein>
    <recommendedName>
        <fullName evidence="5">Crossover junction endodeoxyribonuclease Hje</fullName>
        <shortName evidence="4">Hje</shortName>
        <ecNumber evidence="1">3.1.21.10</ecNumber>
    </recommendedName>
    <alternativeName>
        <fullName evidence="4">Holliday junction resolvase Hje</fullName>
    </alternativeName>
</protein>
<evidence type="ECO:0000250" key="1">
    <source>
        <dbReference type="UniProtKB" id="Q97YX6"/>
    </source>
</evidence>
<evidence type="ECO:0000255" key="2"/>
<evidence type="ECO:0000269" key="3">
    <source>
    </source>
</evidence>
<evidence type="ECO:0000303" key="4">
    <source>
    </source>
</evidence>
<evidence type="ECO:0000305" key="5"/>
<evidence type="ECO:0000312" key="6">
    <source>
        <dbReference type="EMBL" id="ADX84998.1"/>
    </source>
</evidence>